<reference key="1">
    <citation type="journal article" date="2008" name="J. Bacteriol.">
        <title>Genome sequence of Staphylococcus aureus strain Newman and comparative analysis of staphylococcal genomes: polymorphism and evolution of two major pathogenicity islands.</title>
        <authorList>
            <person name="Baba T."/>
            <person name="Bae T."/>
            <person name="Schneewind O."/>
            <person name="Takeuchi F."/>
            <person name="Hiramatsu K."/>
        </authorList>
    </citation>
    <scope>NUCLEOTIDE SEQUENCE [LARGE SCALE GENOMIC DNA]</scope>
    <source>
        <strain>Newman</strain>
    </source>
</reference>
<evidence type="ECO:0000255" key="1">
    <source>
        <dbReference type="HAMAP-Rule" id="MF_01954"/>
    </source>
</evidence>
<evidence type="ECO:0000256" key="2">
    <source>
        <dbReference type="SAM" id="MobiDB-lite"/>
    </source>
</evidence>
<gene>
    <name evidence="1" type="primary">ureB</name>
    <name type="ordered locus">NWMN_2189</name>
</gene>
<feature type="chain" id="PRO_1000073703" description="Urease subunit beta">
    <location>
        <begin position="1"/>
        <end position="136"/>
    </location>
</feature>
<feature type="region of interest" description="Disordered" evidence="2">
    <location>
        <begin position="113"/>
        <end position="136"/>
    </location>
</feature>
<name>URE2_STAAE</name>
<dbReference type="EC" id="3.5.1.5" evidence="1"/>
<dbReference type="EMBL" id="AP009351">
    <property type="protein sequence ID" value="BAF68461.1"/>
    <property type="molecule type" value="Genomic_DNA"/>
</dbReference>
<dbReference type="RefSeq" id="WP_000612129.1">
    <property type="nucleotide sequence ID" value="NZ_JBBIAE010000006.1"/>
</dbReference>
<dbReference type="SMR" id="A6QJC9"/>
<dbReference type="KEGG" id="sae:NWMN_2189"/>
<dbReference type="HOGENOM" id="CLU_129707_2_2_9"/>
<dbReference type="UniPathway" id="UPA00258">
    <property type="reaction ID" value="UER00370"/>
</dbReference>
<dbReference type="Proteomes" id="UP000006386">
    <property type="component" value="Chromosome"/>
</dbReference>
<dbReference type="GO" id="GO:0035550">
    <property type="term" value="C:urease complex"/>
    <property type="evidence" value="ECO:0007669"/>
    <property type="project" value="InterPro"/>
</dbReference>
<dbReference type="GO" id="GO:0009039">
    <property type="term" value="F:urease activity"/>
    <property type="evidence" value="ECO:0007669"/>
    <property type="project" value="UniProtKB-UniRule"/>
</dbReference>
<dbReference type="GO" id="GO:0043419">
    <property type="term" value="P:urea catabolic process"/>
    <property type="evidence" value="ECO:0007669"/>
    <property type="project" value="UniProtKB-UniRule"/>
</dbReference>
<dbReference type="CDD" id="cd00407">
    <property type="entry name" value="Urease_beta"/>
    <property type="match status" value="1"/>
</dbReference>
<dbReference type="FunFam" id="2.10.150.10:FF:000001">
    <property type="entry name" value="Urease subunit beta"/>
    <property type="match status" value="1"/>
</dbReference>
<dbReference type="Gene3D" id="2.10.150.10">
    <property type="entry name" value="Urease, beta subunit"/>
    <property type="match status" value="1"/>
</dbReference>
<dbReference type="HAMAP" id="MF_01954">
    <property type="entry name" value="Urease_beta"/>
    <property type="match status" value="1"/>
</dbReference>
<dbReference type="InterPro" id="IPR002019">
    <property type="entry name" value="Urease_beta-like"/>
</dbReference>
<dbReference type="InterPro" id="IPR036461">
    <property type="entry name" value="Urease_betasu_sf"/>
</dbReference>
<dbReference type="InterPro" id="IPR050069">
    <property type="entry name" value="Urease_subunit"/>
</dbReference>
<dbReference type="NCBIfam" id="NF009682">
    <property type="entry name" value="PRK13203.1"/>
    <property type="match status" value="1"/>
</dbReference>
<dbReference type="NCBIfam" id="TIGR00192">
    <property type="entry name" value="urease_beta"/>
    <property type="match status" value="1"/>
</dbReference>
<dbReference type="PANTHER" id="PTHR33569">
    <property type="entry name" value="UREASE"/>
    <property type="match status" value="1"/>
</dbReference>
<dbReference type="PANTHER" id="PTHR33569:SF1">
    <property type="entry name" value="UREASE"/>
    <property type="match status" value="1"/>
</dbReference>
<dbReference type="Pfam" id="PF00699">
    <property type="entry name" value="Urease_beta"/>
    <property type="match status" value="1"/>
</dbReference>
<dbReference type="SUPFAM" id="SSF51278">
    <property type="entry name" value="Urease, beta-subunit"/>
    <property type="match status" value="1"/>
</dbReference>
<organism>
    <name type="scientific">Staphylococcus aureus (strain Newman)</name>
    <dbReference type="NCBI Taxonomy" id="426430"/>
    <lineage>
        <taxon>Bacteria</taxon>
        <taxon>Bacillati</taxon>
        <taxon>Bacillota</taxon>
        <taxon>Bacilli</taxon>
        <taxon>Bacillales</taxon>
        <taxon>Staphylococcaceae</taxon>
        <taxon>Staphylococcus</taxon>
    </lineage>
</organism>
<accession>A6QJC9</accession>
<proteinExistence type="inferred from homology"/>
<sequence>MIPGEIITKSTEVEINNHHPETVIEVENTGDRPIQVGSHFHFYEANAALDFEREMAYGKHLDIPAGAAVRFEPGDKKEVQLVEYAGKRKIFGFRGMVNGPIDESRVYRPTDENDEYAGVFGDNGAENVNKKGRKRS</sequence>
<protein>
    <recommendedName>
        <fullName evidence="1">Urease subunit beta</fullName>
        <ecNumber evidence="1">3.5.1.5</ecNumber>
    </recommendedName>
    <alternativeName>
        <fullName evidence="1">Urea amidohydrolase subunit beta</fullName>
    </alternativeName>
</protein>
<comment type="catalytic activity">
    <reaction evidence="1">
        <text>urea + 2 H2O + H(+) = hydrogencarbonate + 2 NH4(+)</text>
        <dbReference type="Rhea" id="RHEA:20557"/>
        <dbReference type="ChEBI" id="CHEBI:15377"/>
        <dbReference type="ChEBI" id="CHEBI:15378"/>
        <dbReference type="ChEBI" id="CHEBI:16199"/>
        <dbReference type="ChEBI" id="CHEBI:17544"/>
        <dbReference type="ChEBI" id="CHEBI:28938"/>
        <dbReference type="EC" id="3.5.1.5"/>
    </reaction>
</comment>
<comment type="pathway">
    <text evidence="1">Nitrogen metabolism; urea degradation; CO(2) and NH(3) from urea (urease route): step 1/1.</text>
</comment>
<comment type="subunit">
    <text evidence="1">Heterotrimer of UreA (gamma), UreB (beta) and UreC (alpha) subunits. Three heterotrimers associate to form the active enzyme.</text>
</comment>
<comment type="subcellular location">
    <subcellularLocation>
        <location evidence="1">Cytoplasm</location>
    </subcellularLocation>
</comment>
<comment type="similarity">
    <text evidence="1">Belongs to the urease beta subunit family.</text>
</comment>
<keyword id="KW-0963">Cytoplasm</keyword>
<keyword id="KW-0378">Hydrolase</keyword>